<dbReference type="EMBL" id="AJ271821">
    <property type="protein sequence ID" value="CAB72247.2"/>
    <property type="molecule type" value="Genomic_DNA"/>
</dbReference>
<dbReference type="EMBL" id="CP000117">
    <property type="status" value="NOT_ANNOTATED_CDS"/>
    <property type="molecule type" value="Genomic_DNA"/>
</dbReference>
<dbReference type="RefSeq" id="WP_010998401.1">
    <property type="nucleotide sequence ID" value="NC_007413.1"/>
</dbReference>
<dbReference type="SMR" id="P61049"/>
<dbReference type="GeneID" id="83685328"/>
<dbReference type="Proteomes" id="UP000002533">
    <property type="component" value="Chromosome"/>
</dbReference>
<dbReference type="GO" id="GO:0009512">
    <property type="term" value="C:cytochrome b6f complex"/>
    <property type="evidence" value="ECO:0007669"/>
    <property type="project" value="InterPro"/>
</dbReference>
<dbReference type="GO" id="GO:0031676">
    <property type="term" value="C:plasma membrane-derived thylakoid membrane"/>
    <property type="evidence" value="ECO:0007669"/>
    <property type="project" value="UniProtKB-SubCell"/>
</dbReference>
<dbReference type="GO" id="GO:0045158">
    <property type="term" value="F:electron transporter, transferring electrons within cytochrome b6/f complex of photosystem II activity"/>
    <property type="evidence" value="ECO:0007669"/>
    <property type="project" value="InterPro"/>
</dbReference>
<dbReference type="GO" id="GO:0017004">
    <property type="term" value="P:cytochrome complex assembly"/>
    <property type="evidence" value="ECO:0007669"/>
    <property type="project" value="UniProtKB-UniRule"/>
</dbReference>
<dbReference type="GO" id="GO:0015979">
    <property type="term" value="P:photosynthesis"/>
    <property type="evidence" value="ECO:0007669"/>
    <property type="project" value="UniProtKB-KW"/>
</dbReference>
<dbReference type="HAMAP" id="MF_00395">
    <property type="entry name" value="Cytb6_f_PetN"/>
    <property type="match status" value="1"/>
</dbReference>
<dbReference type="InterPro" id="IPR036143">
    <property type="entry name" value="Cytochr_b6-f_cplx_su8_sf"/>
</dbReference>
<dbReference type="InterPro" id="IPR005497">
    <property type="entry name" value="Cytochrome_b6-f_cplx_su8"/>
</dbReference>
<dbReference type="NCBIfam" id="NF011331">
    <property type="entry name" value="PRK14747.1"/>
    <property type="match status" value="1"/>
</dbReference>
<dbReference type="Pfam" id="PF03742">
    <property type="entry name" value="PetN"/>
    <property type="match status" value="1"/>
</dbReference>
<dbReference type="SUPFAM" id="SSF103451">
    <property type="entry name" value="PetN subunit of the cytochrome b6f complex"/>
    <property type="match status" value="1"/>
</dbReference>
<reference key="1">
    <citation type="submission" date="2000-10" db="EMBL/GenBank/DDBJ databases">
        <title>b6f complex of Anabaena variabilis.</title>
        <authorList>
            <person name="Arnold M."/>
        </authorList>
    </citation>
    <scope>NUCLEOTIDE SEQUENCE [GENOMIC DNA]</scope>
    <source>
        <strain>FD</strain>
    </source>
</reference>
<reference key="2">
    <citation type="journal article" date="2014" name="Stand. Genomic Sci.">
        <title>Complete genome sequence of Anabaena variabilis ATCC 29413.</title>
        <authorList>
            <person name="Thiel T."/>
            <person name="Pratte B.S."/>
            <person name="Zhong J."/>
            <person name="Goodwin L."/>
            <person name="Copeland A."/>
            <person name="Lucas S."/>
            <person name="Han C."/>
            <person name="Pitluck S."/>
            <person name="Land M.L."/>
            <person name="Kyrpides N.C."/>
            <person name="Woyke T."/>
        </authorList>
    </citation>
    <scope>NUCLEOTIDE SEQUENCE [LARGE SCALE GENOMIC DNA]</scope>
    <source>
        <strain>ATCC 29413 / PCC 7937</strain>
    </source>
</reference>
<sequence>MAILTLGWVSLLVVFTWSIAMVVWGRNGL</sequence>
<feature type="chain" id="PRO_0000217135" description="Cytochrome b6-f complex subunit 8">
    <location>
        <begin position="1"/>
        <end position="29"/>
    </location>
</feature>
<feature type="transmembrane region" description="Helical" evidence="2">
    <location>
        <begin position="3"/>
        <end position="23"/>
    </location>
</feature>
<evidence type="ECO:0000250" key="1"/>
<evidence type="ECO:0000255" key="2"/>
<evidence type="ECO:0000305" key="3"/>
<keyword id="KW-0249">Electron transport</keyword>
<keyword id="KW-0472">Membrane</keyword>
<keyword id="KW-0602">Photosynthesis</keyword>
<keyword id="KW-0793">Thylakoid</keyword>
<keyword id="KW-0812">Transmembrane</keyword>
<keyword id="KW-1133">Transmembrane helix</keyword>
<keyword id="KW-0813">Transport</keyword>
<name>PETN_TRIV2</name>
<comment type="function">
    <text evidence="1">Component of the cytochrome b6-f complex, which mediates electron transfer between photosystem II (PSII) and photosystem I (PSI), cyclic electron flow around PSI, and state transitions.</text>
</comment>
<comment type="subunit">
    <text evidence="1">The 4 large subunits of the cytochrome b6-f complex are cytochrome b6, subunit IV (17 kDa polypeptide, PetD), cytochrome f and the Rieske protein, while the 4 small subunits are PetG, PetL, PetM and PetN. The complex functions as a dimer (By similarity).</text>
</comment>
<comment type="subcellular location">
    <subcellularLocation>
        <location evidence="1">Cellular thylakoid membrane</location>
        <topology evidence="1">Single-pass membrane protein</topology>
    </subcellularLocation>
</comment>
<comment type="similarity">
    <text evidence="3">Belongs to the PetN family.</text>
</comment>
<proteinExistence type="inferred from homology"/>
<protein>
    <recommendedName>
        <fullName>Cytochrome b6-f complex subunit 8</fullName>
    </recommendedName>
    <alternativeName>
        <fullName>Cytochrome b6-f complex subunit PetN</fullName>
    </alternativeName>
    <alternativeName>
        <fullName>Cytochrome b6-f complex subunit VIII</fullName>
    </alternativeName>
</protein>
<organism>
    <name type="scientific">Trichormus variabilis (strain ATCC 29413 / PCC 7937)</name>
    <name type="common">Anabaena variabilis</name>
    <dbReference type="NCBI Taxonomy" id="240292"/>
    <lineage>
        <taxon>Bacteria</taxon>
        <taxon>Bacillati</taxon>
        <taxon>Cyanobacteriota</taxon>
        <taxon>Cyanophyceae</taxon>
        <taxon>Nostocales</taxon>
        <taxon>Nostocaceae</taxon>
        <taxon>Trichormus</taxon>
    </lineage>
</organism>
<gene>
    <name type="primary">petN</name>
    <name type="ordered locus">Ava_1211.1</name>
</gene>
<accession>P61049</accession>
<accession>Q9L3P6</accession>